<keyword id="KW-0460">Magnesium</keyword>
<keyword id="KW-0479">Metal-binding</keyword>
<keyword id="KW-0808">Transferase</keyword>
<accession>P0DH33</accession>
<accession>Q8K5S5</accession>
<protein>
    <recommendedName>
        <fullName evidence="1">Isoprenyl transferase</fullName>
        <ecNumber evidence="1">2.5.1.-</ecNumber>
    </recommendedName>
</protein>
<organism>
    <name type="scientific">Streptococcus pyogenes serotype M3 (strain SSI-1)</name>
    <dbReference type="NCBI Taxonomy" id="193567"/>
    <lineage>
        <taxon>Bacteria</taxon>
        <taxon>Bacillati</taxon>
        <taxon>Bacillota</taxon>
        <taxon>Bacilli</taxon>
        <taxon>Lactobacillales</taxon>
        <taxon>Streptococcaceae</taxon>
        <taxon>Streptococcus</taxon>
    </lineage>
</organism>
<evidence type="ECO:0000255" key="1">
    <source>
        <dbReference type="HAMAP-Rule" id="MF_01139"/>
    </source>
</evidence>
<dbReference type="EC" id="2.5.1.-" evidence="1"/>
<dbReference type="EMBL" id="BA000034">
    <property type="protein sequence ID" value="BAC64788.1"/>
    <property type="molecule type" value="Genomic_DNA"/>
</dbReference>
<dbReference type="RefSeq" id="WP_011055023.1">
    <property type="nucleotide sequence ID" value="NC_004606.1"/>
</dbReference>
<dbReference type="SMR" id="P0DH33"/>
<dbReference type="KEGG" id="sps:SPs1693"/>
<dbReference type="HOGENOM" id="CLU_038505_1_1_9"/>
<dbReference type="GO" id="GO:0005829">
    <property type="term" value="C:cytosol"/>
    <property type="evidence" value="ECO:0007669"/>
    <property type="project" value="TreeGrafter"/>
</dbReference>
<dbReference type="GO" id="GO:0008834">
    <property type="term" value="F:ditrans,polycis-undecaprenyl-diphosphate synthase [(2E,6E)-farnesyl-diphosphate specific] activity"/>
    <property type="evidence" value="ECO:0007669"/>
    <property type="project" value="TreeGrafter"/>
</dbReference>
<dbReference type="GO" id="GO:0000287">
    <property type="term" value="F:magnesium ion binding"/>
    <property type="evidence" value="ECO:0007669"/>
    <property type="project" value="UniProtKB-UniRule"/>
</dbReference>
<dbReference type="GO" id="GO:0030145">
    <property type="term" value="F:manganese ion binding"/>
    <property type="evidence" value="ECO:0007669"/>
    <property type="project" value="TreeGrafter"/>
</dbReference>
<dbReference type="GO" id="GO:0016094">
    <property type="term" value="P:polyprenol biosynthetic process"/>
    <property type="evidence" value="ECO:0007669"/>
    <property type="project" value="TreeGrafter"/>
</dbReference>
<dbReference type="CDD" id="cd00475">
    <property type="entry name" value="Cis_IPPS"/>
    <property type="match status" value="1"/>
</dbReference>
<dbReference type="FunFam" id="3.40.1180.10:FF:000001">
    <property type="entry name" value="(2E,6E)-farnesyl-diphosphate-specific ditrans,polycis-undecaprenyl-diphosphate synthase"/>
    <property type="match status" value="1"/>
</dbReference>
<dbReference type="Gene3D" id="3.40.1180.10">
    <property type="entry name" value="Decaprenyl diphosphate synthase-like"/>
    <property type="match status" value="1"/>
</dbReference>
<dbReference type="HAMAP" id="MF_01139">
    <property type="entry name" value="ISPT"/>
    <property type="match status" value="1"/>
</dbReference>
<dbReference type="InterPro" id="IPR001441">
    <property type="entry name" value="UPP_synth-like"/>
</dbReference>
<dbReference type="InterPro" id="IPR018520">
    <property type="entry name" value="UPP_synth-like_CS"/>
</dbReference>
<dbReference type="InterPro" id="IPR036424">
    <property type="entry name" value="UPP_synth-like_sf"/>
</dbReference>
<dbReference type="NCBIfam" id="NF011405">
    <property type="entry name" value="PRK14830.1"/>
    <property type="match status" value="1"/>
</dbReference>
<dbReference type="NCBIfam" id="TIGR00055">
    <property type="entry name" value="uppS"/>
    <property type="match status" value="1"/>
</dbReference>
<dbReference type="PANTHER" id="PTHR10291:SF0">
    <property type="entry name" value="DEHYDRODOLICHYL DIPHOSPHATE SYNTHASE 2"/>
    <property type="match status" value="1"/>
</dbReference>
<dbReference type="PANTHER" id="PTHR10291">
    <property type="entry name" value="DEHYDRODOLICHYL DIPHOSPHATE SYNTHASE FAMILY MEMBER"/>
    <property type="match status" value="1"/>
</dbReference>
<dbReference type="Pfam" id="PF01255">
    <property type="entry name" value="Prenyltransf"/>
    <property type="match status" value="1"/>
</dbReference>
<dbReference type="SUPFAM" id="SSF64005">
    <property type="entry name" value="Undecaprenyl diphosphate synthase"/>
    <property type="match status" value="1"/>
</dbReference>
<dbReference type="PROSITE" id="PS01066">
    <property type="entry name" value="UPP_SYNTHASE"/>
    <property type="match status" value="1"/>
</dbReference>
<reference key="1">
    <citation type="journal article" date="2003" name="Genome Res.">
        <title>Genome sequence of an M3 strain of Streptococcus pyogenes reveals a large-scale genomic rearrangement in invasive strains and new insights into phage evolution.</title>
        <authorList>
            <person name="Nakagawa I."/>
            <person name="Kurokawa K."/>
            <person name="Yamashita A."/>
            <person name="Nakata M."/>
            <person name="Tomiyasu Y."/>
            <person name="Okahashi N."/>
            <person name="Kawabata S."/>
            <person name="Yamazaki K."/>
            <person name="Shiba T."/>
            <person name="Yasunaga T."/>
            <person name="Hayashi H."/>
            <person name="Hattori M."/>
            <person name="Hamada S."/>
        </authorList>
    </citation>
    <scope>NUCLEOTIDE SEQUENCE [LARGE SCALE GENOMIC DNA]</scope>
    <source>
        <strain>SSI-1</strain>
    </source>
</reference>
<proteinExistence type="inferred from homology"/>
<sequence length="249" mass="28242">MFGLKAKSTKKVFGGIPKHIGIIMDGNGRWAKKRLKPRVFGHKAGMDALQEVTITASELGVKVLTVYAFSTENWSRPQDEVSFIMNLPVTFFDKYVPVLHENNVKIQMIGETSRLPEDTLAALNAAIDKTKRNTGLILNFALNYGGRAEITSAVRFIAQDVLDAKLNPGDITEDLIANYLMTDHLPYLYRDPDLIIRTSGELRLSNFLPWQSAYSEFYFTPVLWPDFKKAELLKAIADYNHRQRRFGKV</sequence>
<name>ISPT_STRPQ</name>
<gene>
    <name evidence="1" type="primary">uppS</name>
    <name type="ordered locus">SPs1693</name>
</gene>
<feature type="chain" id="PRO_0000411656" description="Isoprenyl transferase">
    <location>
        <begin position="1"/>
        <end position="249"/>
    </location>
</feature>
<feature type="active site" evidence="1">
    <location>
        <position position="25"/>
    </location>
</feature>
<feature type="active site" description="Proton acceptor" evidence="1">
    <location>
        <position position="73"/>
    </location>
</feature>
<feature type="binding site" evidence="1">
    <location>
        <position position="25"/>
    </location>
    <ligand>
        <name>Mg(2+)</name>
        <dbReference type="ChEBI" id="CHEBI:18420"/>
    </ligand>
</feature>
<feature type="binding site" evidence="1">
    <location>
        <begin position="26"/>
        <end position="29"/>
    </location>
    <ligand>
        <name>substrate</name>
    </ligand>
</feature>
<feature type="binding site" evidence="1">
    <location>
        <position position="30"/>
    </location>
    <ligand>
        <name>substrate</name>
    </ligand>
</feature>
<feature type="binding site" evidence="1">
    <location>
        <position position="38"/>
    </location>
    <ligand>
        <name>substrate</name>
    </ligand>
</feature>
<feature type="binding site" evidence="1">
    <location>
        <position position="42"/>
    </location>
    <ligand>
        <name>substrate</name>
    </ligand>
</feature>
<feature type="binding site" evidence="1">
    <location>
        <begin position="70"/>
        <end position="72"/>
    </location>
    <ligand>
        <name>substrate</name>
    </ligand>
</feature>
<feature type="binding site" evidence="1">
    <location>
        <position position="74"/>
    </location>
    <ligand>
        <name>substrate</name>
    </ligand>
</feature>
<feature type="binding site" evidence="1">
    <location>
        <position position="76"/>
    </location>
    <ligand>
        <name>substrate</name>
    </ligand>
</feature>
<feature type="binding site" evidence="1">
    <location>
        <position position="197"/>
    </location>
    <ligand>
        <name>substrate</name>
    </ligand>
</feature>
<feature type="binding site" evidence="1">
    <location>
        <begin position="203"/>
        <end position="205"/>
    </location>
    <ligand>
        <name>substrate</name>
    </ligand>
</feature>
<feature type="binding site" evidence="1">
    <location>
        <position position="216"/>
    </location>
    <ligand>
        <name>Mg(2+)</name>
        <dbReference type="ChEBI" id="CHEBI:18420"/>
    </ligand>
</feature>
<comment type="function">
    <text evidence="1">Catalyzes the condensation of isopentenyl diphosphate (IPP) with allylic pyrophosphates generating different type of terpenoids.</text>
</comment>
<comment type="cofactor">
    <cofactor evidence="1">
        <name>Mg(2+)</name>
        <dbReference type="ChEBI" id="CHEBI:18420"/>
    </cofactor>
    <text evidence="1">Binds 2 magnesium ions per subunit.</text>
</comment>
<comment type="subunit">
    <text evidence="1">Homodimer.</text>
</comment>
<comment type="similarity">
    <text evidence="1">Belongs to the UPP synthase family.</text>
</comment>